<organism>
    <name type="scientific">Borrelia turicatae (strain 91E135)</name>
    <dbReference type="NCBI Taxonomy" id="314724"/>
    <lineage>
        <taxon>Bacteria</taxon>
        <taxon>Pseudomonadati</taxon>
        <taxon>Spirochaetota</taxon>
        <taxon>Spirochaetia</taxon>
        <taxon>Spirochaetales</taxon>
        <taxon>Borreliaceae</taxon>
        <taxon>Borrelia</taxon>
    </lineage>
</organism>
<keyword id="KW-1185">Reference proteome</keyword>
<keyword id="KW-0687">Ribonucleoprotein</keyword>
<keyword id="KW-0689">Ribosomal protein</keyword>
<comment type="similarity">
    <text evidence="1">Belongs to the bacterial ribosomal protein bL27 family.</text>
</comment>
<sequence length="81" mass="8823">MATSKSGGSSKNGRDSISKRLGVKRSGGQFVRSGEIIVRQRGTKFHKGKNSGLGRDHTIFALKDGVVEFKTSKGRKYINII</sequence>
<feature type="chain" id="PRO_1000146511" description="Large ribosomal subunit protein bL27">
    <location>
        <begin position="1"/>
        <end position="81"/>
    </location>
</feature>
<feature type="region of interest" description="Disordered" evidence="2">
    <location>
        <begin position="1"/>
        <end position="26"/>
    </location>
</feature>
<feature type="compositionally biased region" description="Polar residues" evidence="2">
    <location>
        <begin position="1"/>
        <end position="11"/>
    </location>
</feature>
<evidence type="ECO:0000255" key="1">
    <source>
        <dbReference type="HAMAP-Rule" id="MF_00539"/>
    </source>
</evidence>
<evidence type="ECO:0000256" key="2">
    <source>
        <dbReference type="SAM" id="MobiDB-lite"/>
    </source>
</evidence>
<evidence type="ECO:0000305" key="3"/>
<name>RL27_BORT9</name>
<dbReference type="EMBL" id="CP000049">
    <property type="protein sequence ID" value="AAX18094.1"/>
    <property type="molecule type" value="Genomic_DNA"/>
</dbReference>
<dbReference type="RefSeq" id="WP_011772712.1">
    <property type="nucleotide sequence ID" value="NC_008710.1"/>
</dbReference>
<dbReference type="SMR" id="A1R0K3"/>
<dbReference type="KEGG" id="btu:BT0780"/>
<dbReference type="eggNOG" id="COG0211">
    <property type="taxonomic scope" value="Bacteria"/>
</dbReference>
<dbReference type="HOGENOM" id="CLU_095424_4_1_12"/>
<dbReference type="Proteomes" id="UP000001205">
    <property type="component" value="Chromosome"/>
</dbReference>
<dbReference type="GO" id="GO:0022625">
    <property type="term" value="C:cytosolic large ribosomal subunit"/>
    <property type="evidence" value="ECO:0007669"/>
    <property type="project" value="TreeGrafter"/>
</dbReference>
<dbReference type="GO" id="GO:0003735">
    <property type="term" value="F:structural constituent of ribosome"/>
    <property type="evidence" value="ECO:0007669"/>
    <property type="project" value="InterPro"/>
</dbReference>
<dbReference type="GO" id="GO:0006412">
    <property type="term" value="P:translation"/>
    <property type="evidence" value="ECO:0007669"/>
    <property type="project" value="UniProtKB-UniRule"/>
</dbReference>
<dbReference type="FunFam" id="2.40.50.100:FF:000020">
    <property type="entry name" value="50S ribosomal protein L27"/>
    <property type="match status" value="1"/>
</dbReference>
<dbReference type="Gene3D" id="2.40.50.100">
    <property type="match status" value="1"/>
</dbReference>
<dbReference type="HAMAP" id="MF_00539">
    <property type="entry name" value="Ribosomal_bL27"/>
    <property type="match status" value="1"/>
</dbReference>
<dbReference type="InterPro" id="IPR001684">
    <property type="entry name" value="Ribosomal_bL27"/>
</dbReference>
<dbReference type="InterPro" id="IPR018261">
    <property type="entry name" value="Ribosomal_bL27_CS"/>
</dbReference>
<dbReference type="NCBIfam" id="TIGR00062">
    <property type="entry name" value="L27"/>
    <property type="match status" value="1"/>
</dbReference>
<dbReference type="PANTHER" id="PTHR15893:SF0">
    <property type="entry name" value="LARGE RIBOSOMAL SUBUNIT PROTEIN BL27M"/>
    <property type="match status" value="1"/>
</dbReference>
<dbReference type="PANTHER" id="PTHR15893">
    <property type="entry name" value="RIBOSOMAL PROTEIN L27"/>
    <property type="match status" value="1"/>
</dbReference>
<dbReference type="Pfam" id="PF01016">
    <property type="entry name" value="Ribosomal_L27"/>
    <property type="match status" value="1"/>
</dbReference>
<dbReference type="PRINTS" id="PR00063">
    <property type="entry name" value="RIBOSOMALL27"/>
</dbReference>
<dbReference type="SUPFAM" id="SSF110324">
    <property type="entry name" value="Ribosomal L27 protein-like"/>
    <property type="match status" value="1"/>
</dbReference>
<dbReference type="PROSITE" id="PS00831">
    <property type="entry name" value="RIBOSOMAL_L27"/>
    <property type="match status" value="1"/>
</dbReference>
<gene>
    <name evidence="1" type="primary">rpmA</name>
    <name type="ordered locus">BT0780</name>
</gene>
<proteinExistence type="inferred from homology"/>
<reference key="1">
    <citation type="submission" date="2004-12" db="EMBL/GenBank/DDBJ databases">
        <title>The genome sequence of Borrelia hermsii and Borrelia turicatae: comparative analysis of two agents of endemic N. America relapsing fever.</title>
        <authorList>
            <person name="Porcella S.F."/>
            <person name="Raffel S.J."/>
            <person name="Schrumpf M.E."/>
            <person name="Montgomery B."/>
            <person name="Smith T."/>
            <person name="Schwan T.G."/>
        </authorList>
    </citation>
    <scope>NUCLEOTIDE SEQUENCE [LARGE SCALE GENOMIC DNA]</scope>
    <source>
        <strain>91E135</strain>
    </source>
</reference>
<protein>
    <recommendedName>
        <fullName evidence="1">Large ribosomal subunit protein bL27</fullName>
    </recommendedName>
    <alternativeName>
        <fullName evidence="3">50S ribosomal protein L27</fullName>
    </alternativeName>
</protein>
<accession>A1R0K3</accession>